<name>TSAD_DESPS</name>
<gene>
    <name evidence="1" type="primary">tsaD</name>
    <name type="synonym">gcp</name>
    <name type="ordered locus">DP2173</name>
</gene>
<comment type="function">
    <text evidence="1">Required for the formation of a threonylcarbamoyl group on adenosine at position 37 (t(6)A37) in tRNAs that read codons beginning with adenine. Is involved in the transfer of the threonylcarbamoyl moiety of threonylcarbamoyl-AMP (TC-AMP) to the N6 group of A37, together with TsaE and TsaB. TsaD likely plays a direct catalytic role in this reaction.</text>
</comment>
<comment type="catalytic activity">
    <reaction evidence="1">
        <text>L-threonylcarbamoyladenylate + adenosine(37) in tRNA = N(6)-L-threonylcarbamoyladenosine(37) in tRNA + AMP + H(+)</text>
        <dbReference type="Rhea" id="RHEA:37059"/>
        <dbReference type="Rhea" id="RHEA-COMP:10162"/>
        <dbReference type="Rhea" id="RHEA-COMP:10163"/>
        <dbReference type="ChEBI" id="CHEBI:15378"/>
        <dbReference type="ChEBI" id="CHEBI:73682"/>
        <dbReference type="ChEBI" id="CHEBI:74411"/>
        <dbReference type="ChEBI" id="CHEBI:74418"/>
        <dbReference type="ChEBI" id="CHEBI:456215"/>
        <dbReference type="EC" id="2.3.1.234"/>
    </reaction>
</comment>
<comment type="cofactor">
    <cofactor evidence="1">
        <name>Fe(2+)</name>
        <dbReference type="ChEBI" id="CHEBI:29033"/>
    </cofactor>
    <text evidence="1">Binds 1 Fe(2+) ion per subunit.</text>
</comment>
<comment type="subcellular location">
    <subcellularLocation>
        <location evidence="1">Cytoplasm</location>
    </subcellularLocation>
</comment>
<comment type="similarity">
    <text evidence="1">Belongs to the KAE1 / TsaD family.</text>
</comment>
<keyword id="KW-0012">Acyltransferase</keyword>
<keyword id="KW-0963">Cytoplasm</keyword>
<keyword id="KW-0408">Iron</keyword>
<keyword id="KW-0479">Metal-binding</keyword>
<keyword id="KW-1185">Reference proteome</keyword>
<keyword id="KW-0808">Transferase</keyword>
<keyword id="KW-0819">tRNA processing</keyword>
<evidence type="ECO:0000255" key="1">
    <source>
        <dbReference type="HAMAP-Rule" id="MF_01445"/>
    </source>
</evidence>
<accession>Q6AL73</accession>
<sequence>MYSRKINMIILGIESSCDDTSAAVVIDGTAIQSNVISGQEEIHNCFGGVVPELASRSHLSAIQPVVEKALSDAKISLDDIDLIATTQGPGLSGSLLVGYSYAKSLSLVKKIPFVGVDHMAGHALAILLEEETPDFPFIALTASGGTSSIFLVKSSTDFELLGRTRDDAAGEAFDKVAKVLGLPYPGGPHIAAHAETGDEKSIKFPRAWLDKDGFDFSFSGLKTAVLNYHNKIVQKNGSITKEERADICASFQQAVIDVLVTKTINAARTHGISTVVLGGGVSSNRALRLAFSHECDKCKLQFFVPAAKLCTDNAAMIAVAGYHKYLRFGPGNLSDDVYSRSQLG</sequence>
<reference key="1">
    <citation type="journal article" date="2004" name="Environ. Microbiol.">
        <title>The genome of Desulfotalea psychrophila, a sulfate-reducing bacterium from permanently cold Arctic sediments.</title>
        <authorList>
            <person name="Rabus R."/>
            <person name="Ruepp A."/>
            <person name="Frickey T."/>
            <person name="Rattei T."/>
            <person name="Fartmann B."/>
            <person name="Stark M."/>
            <person name="Bauer M."/>
            <person name="Zibat A."/>
            <person name="Lombardot T."/>
            <person name="Becker I."/>
            <person name="Amann J."/>
            <person name="Gellner K."/>
            <person name="Teeling H."/>
            <person name="Leuschner W.D."/>
            <person name="Gloeckner F.-O."/>
            <person name="Lupas A.N."/>
            <person name="Amann R."/>
            <person name="Klenk H.-P."/>
        </authorList>
    </citation>
    <scope>NUCLEOTIDE SEQUENCE [LARGE SCALE GENOMIC DNA]</scope>
    <source>
        <strain>DSM 12343 / LSv54</strain>
    </source>
</reference>
<feature type="chain" id="PRO_0000303347" description="tRNA N6-adenosine threonylcarbamoyltransferase">
    <location>
        <begin position="1"/>
        <end position="344"/>
    </location>
</feature>
<feature type="binding site" evidence="1">
    <location>
        <position position="118"/>
    </location>
    <ligand>
        <name>Fe cation</name>
        <dbReference type="ChEBI" id="CHEBI:24875"/>
    </ligand>
</feature>
<feature type="binding site" evidence="1">
    <location>
        <position position="122"/>
    </location>
    <ligand>
        <name>Fe cation</name>
        <dbReference type="ChEBI" id="CHEBI:24875"/>
    </ligand>
</feature>
<feature type="binding site" evidence="1">
    <location>
        <begin position="141"/>
        <end position="145"/>
    </location>
    <ligand>
        <name>substrate</name>
    </ligand>
</feature>
<feature type="binding site" evidence="1">
    <location>
        <position position="174"/>
    </location>
    <ligand>
        <name>substrate</name>
    </ligand>
</feature>
<feature type="binding site" evidence="1">
    <location>
        <position position="187"/>
    </location>
    <ligand>
        <name>substrate</name>
    </ligand>
</feature>
<feature type="binding site" evidence="1">
    <location>
        <position position="284"/>
    </location>
    <ligand>
        <name>substrate</name>
    </ligand>
</feature>
<feature type="binding site" evidence="1">
    <location>
        <position position="312"/>
    </location>
    <ligand>
        <name>Fe cation</name>
        <dbReference type="ChEBI" id="CHEBI:24875"/>
    </ligand>
</feature>
<protein>
    <recommendedName>
        <fullName evidence="1">tRNA N6-adenosine threonylcarbamoyltransferase</fullName>
        <ecNumber evidence="1">2.3.1.234</ecNumber>
    </recommendedName>
    <alternativeName>
        <fullName evidence="1">N6-L-threonylcarbamoyladenine synthase</fullName>
        <shortName evidence="1">t(6)A synthase</shortName>
    </alternativeName>
    <alternativeName>
        <fullName evidence="1">t(6)A37 threonylcarbamoyladenosine biosynthesis protein TsaD</fullName>
    </alternativeName>
    <alternativeName>
        <fullName evidence="1">tRNA threonylcarbamoyladenosine biosynthesis protein TsaD</fullName>
    </alternativeName>
</protein>
<proteinExistence type="inferred from homology"/>
<dbReference type="EC" id="2.3.1.234" evidence="1"/>
<dbReference type="EMBL" id="CR522870">
    <property type="protein sequence ID" value="CAG36902.1"/>
    <property type="molecule type" value="Genomic_DNA"/>
</dbReference>
<dbReference type="SMR" id="Q6AL73"/>
<dbReference type="STRING" id="177439.DP2173"/>
<dbReference type="KEGG" id="dps:DP2173"/>
<dbReference type="eggNOG" id="COG0533">
    <property type="taxonomic scope" value="Bacteria"/>
</dbReference>
<dbReference type="HOGENOM" id="CLU_023208_0_2_7"/>
<dbReference type="OrthoDB" id="9806197at2"/>
<dbReference type="Proteomes" id="UP000000602">
    <property type="component" value="Chromosome"/>
</dbReference>
<dbReference type="GO" id="GO:0005737">
    <property type="term" value="C:cytoplasm"/>
    <property type="evidence" value="ECO:0007669"/>
    <property type="project" value="UniProtKB-SubCell"/>
</dbReference>
<dbReference type="GO" id="GO:0005506">
    <property type="term" value="F:iron ion binding"/>
    <property type="evidence" value="ECO:0007669"/>
    <property type="project" value="UniProtKB-UniRule"/>
</dbReference>
<dbReference type="GO" id="GO:0061711">
    <property type="term" value="F:N(6)-L-threonylcarbamoyladenine synthase activity"/>
    <property type="evidence" value="ECO:0007669"/>
    <property type="project" value="UniProtKB-EC"/>
</dbReference>
<dbReference type="GO" id="GO:0002949">
    <property type="term" value="P:tRNA threonylcarbamoyladenosine modification"/>
    <property type="evidence" value="ECO:0007669"/>
    <property type="project" value="UniProtKB-UniRule"/>
</dbReference>
<dbReference type="CDD" id="cd24133">
    <property type="entry name" value="ASKHA_NBD_TsaD_bac"/>
    <property type="match status" value="1"/>
</dbReference>
<dbReference type="FunFam" id="3.30.420.40:FF:000040">
    <property type="entry name" value="tRNA N6-adenosine threonylcarbamoyltransferase"/>
    <property type="match status" value="1"/>
</dbReference>
<dbReference type="Gene3D" id="3.30.420.40">
    <property type="match status" value="2"/>
</dbReference>
<dbReference type="HAMAP" id="MF_01445">
    <property type="entry name" value="TsaD"/>
    <property type="match status" value="1"/>
</dbReference>
<dbReference type="InterPro" id="IPR043129">
    <property type="entry name" value="ATPase_NBD"/>
</dbReference>
<dbReference type="InterPro" id="IPR000905">
    <property type="entry name" value="Gcp-like_dom"/>
</dbReference>
<dbReference type="InterPro" id="IPR017861">
    <property type="entry name" value="KAE1/TsaD"/>
</dbReference>
<dbReference type="InterPro" id="IPR022450">
    <property type="entry name" value="TsaD"/>
</dbReference>
<dbReference type="NCBIfam" id="TIGR00329">
    <property type="entry name" value="gcp_kae1"/>
    <property type="match status" value="1"/>
</dbReference>
<dbReference type="NCBIfam" id="TIGR03723">
    <property type="entry name" value="T6A_TsaD_YgjD"/>
    <property type="match status" value="1"/>
</dbReference>
<dbReference type="PANTHER" id="PTHR11735">
    <property type="entry name" value="TRNA N6-ADENOSINE THREONYLCARBAMOYLTRANSFERASE"/>
    <property type="match status" value="1"/>
</dbReference>
<dbReference type="PANTHER" id="PTHR11735:SF6">
    <property type="entry name" value="TRNA N6-ADENOSINE THREONYLCARBAMOYLTRANSFERASE, MITOCHONDRIAL"/>
    <property type="match status" value="1"/>
</dbReference>
<dbReference type="Pfam" id="PF00814">
    <property type="entry name" value="TsaD"/>
    <property type="match status" value="1"/>
</dbReference>
<dbReference type="PRINTS" id="PR00789">
    <property type="entry name" value="OSIALOPTASE"/>
</dbReference>
<dbReference type="SUPFAM" id="SSF53067">
    <property type="entry name" value="Actin-like ATPase domain"/>
    <property type="match status" value="2"/>
</dbReference>
<organism>
    <name type="scientific">Desulfotalea psychrophila (strain LSv54 / DSM 12343)</name>
    <dbReference type="NCBI Taxonomy" id="177439"/>
    <lineage>
        <taxon>Bacteria</taxon>
        <taxon>Pseudomonadati</taxon>
        <taxon>Thermodesulfobacteriota</taxon>
        <taxon>Desulfobulbia</taxon>
        <taxon>Desulfobulbales</taxon>
        <taxon>Desulfocapsaceae</taxon>
        <taxon>Desulfotalea</taxon>
    </lineage>
</organism>